<proteinExistence type="evidence at transcript level"/>
<gene>
    <name type="primary">tyw1</name>
    <name type="synonym">rsafd1</name>
    <name type="ORF">zgc:153368</name>
</gene>
<accession>Q08C92</accession>
<evidence type="ECO:0000250" key="1"/>
<evidence type="ECO:0000255" key="2"/>
<evidence type="ECO:0000255" key="3">
    <source>
        <dbReference type="PROSITE-ProRule" id="PRU00088"/>
    </source>
</evidence>
<evidence type="ECO:0000255" key="4">
    <source>
        <dbReference type="PROSITE-ProRule" id="PRU01266"/>
    </source>
</evidence>
<evidence type="ECO:0000256" key="5">
    <source>
        <dbReference type="SAM" id="MobiDB-lite"/>
    </source>
</evidence>
<evidence type="ECO:0000305" key="6"/>
<name>TYW1_DANRE</name>
<organism>
    <name type="scientific">Danio rerio</name>
    <name type="common">Zebrafish</name>
    <name type="synonym">Brachydanio rerio</name>
    <dbReference type="NCBI Taxonomy" id="7955"/>
    <lineage>
        <taxon>Eukaryota</taxon>
        <taxon>Metazoa</taxon>
        <taxon>Chordata</taxon>
        <taxon>Craniata</taxon>
        <taxon>Vertebrata</taxon>
        <taxon>Euteleostomi</taxon>
        <taxon>Actinopterygii</taxon>
        <taxon>Neopterygii</taxon>
        <taxon>Teleostei</taxon>
        <taxon>Ostariophysi</taxon>
        <taxon>Cypriniformes</taxon>
        <taxon>Danionidae</taxon>
        <taxon>Danioninae</taxon>
        <taxon>Danio</taxon>
    </lineage>
</organism>
<keyword id="KW-0004">4Fe-4S</keyword>
<keyword id="KW-0408">Iron</keyword>
<keyword id="KW-0411">Iron-sulfur</keyword>
<keyword id="KW-0456">Lyase</keyword>
<keyword id="KW-0479">Metal-binding</keyword>
<keyword id="KW-0547">Nucleotide-binding</keyword>
<keyword id="KW-1185">Reference proteome</keyword>
<keyword id="KW-0949">S-adenosyl-L-methionine</keyword>
<keyword id="KW-0819">tRNA processing</keyword>
<protein>
    <recommendedName>
        <fullName>S-adenosyl-L-methionine-dependent tRNA 4-demethylwyosine synthase TYW1</fullName>
        <ecNumber>4.1.3.44</ecNumber>
    </recommendedName>
    <alternativeName>
        <fullName>Radical S-adenosyl methionine and flavodoxin domain-containing protein 1</fullName>
    </alternativeName>
    <alternativeName>
        <fullName>tRNA wybutosine-synthesizing protein 1 homolog</fullName>
    </alternativeName>
    <alternativeName>
        <fullName>tRNA-yW-synthesizing protein</fullName>
    </alternativeName>
</protein>
<feature type="chain" id="PRO_0000281830" description="S-adenosyl-L-methionine-dependent tRNA 4-demethylwyosine synthase TYW1">
    <location>
        <begin position="1"/>
        <end position="730"/>
    </location>
</feature>
<feature type="domain" description="Flavodoxin-like" evidence="3">
    <location>
        <begin position="79"/>
        <end position="237"/>
    </location>
</feature>
<feature type="domain" description="Radical SAM core" evidence="4">
    <location>
        <begin position="398"/>
        <end position="642"/>
    </location>
</feature>
<feature type="region of interest" description="Disordered" evidence="5">
    <location>
        <begin position="253"/>
        <end position="351"/>
    </location>
</feature>
<feature type="compositionally biased region" description="Basic and acidic residues" evidence="5">
    <location>
        <begin position="267"/>
        <end position="282"/>
    </location>
</feature>
<feature type="compositionally biased region" description="Acidic residues" evidence="5">
    <location>
        <begin position="283"/>
        <end position="297"/>
    </location>
</feature>
<feature type="compositionally biased region" description="Basic and acidic residues" evidence="5">
    <location>
        <begin position="333"/>
        <end position="351"/>
    </location>
</feature>
<feature type="binding site" evidence="3">
    <location>
        <begin position="85"/>
        <end position="89"/>
    </location>
    <ligand>
        <name>FMN</name>
        <dbReference type="ChEBI" id="CHEBI:58210"/>
    </ligand>
</feature>
<feature type="binding site" evidence="3">
    <location>
        <begin position="176"/>
        <end position="208"/>
    </location>
    <ligand>
        <name>FMN</name>
        <dbReference type="ChEBI" id="CHEBI:58210"/>
    </ligand>
</feature>
<feature type="binding site" evidence="2">
    <location>
        <position position="414"/>
    </location>
    <ligand>
        <name>[4Fe-4S] cluster</name>
        <dbReference type="ChEBI" id="CHEBI:49883"/>
        <note>4Fe-4S-S-AdoMet</note>
    </ligand>
</feature>
<feature type="binding site" evidence="2">
    <location>
        <position position="418"/>
    </location>
    <ligand>
        <name>[4Fe-4S] cluster</name>
        <dbReference type="ChEBI" id="CHEBI:49883"/>
        <note>4Fe-4S-S-AdoMet</note>
    </ligand>
</feature>
<feature type="binding site" evidence="2">
    <location>
        <position position="421"/>
    </location>
    <ligand>
        <name>[4Fe-4S] cluster</name>
        <dbReference type="ChEBI" id="CHEBI:49883"/>
        <note>4Fe-4S-S-AdoMet</note>
    </ligand>
</feature>
<sequence>MSGVLNDVRDYTEGYLQVLWQNRLYVYSTAAVLIGVWFTVNMLFKKKKMVHPVSPLASKSVKKQEPASEAKKVIYVSGVKVFYGSQTGTAKGFAKELAEDVIAQGIQCEVIDMKDFDPEDRLAEECTSKIICVFLVATYTDGQPTESAEWFCKWLEEASTDFRYGKTYLKGMRYAVFGLGNSVYVGHFNTVSKSIDKWLWMLSAARIMTRGEGDCNVVKSRHGSVQADFQVWKGKFLNRLQALAKGEKKACSGNCKKASCKNKKKHKEEAEDNHSLAEKNNSEEELMESSSDEESSSEDEKSHGSVIDMEDLGNVMNHMKKAKQRMEEDEEDSQRVKQNGERKSECEEERREMITPALRDSLTKQGYKLIGSHSGVKLRRWTKSMLRGRGGCYKHTFYGIESHRCMETTPSLACANKCVFCWRHHTNPVGTEWRWKMDPAEKIIQEAMENHRNMIRQFRGVPGVRPERFEEGLTVKHCALSLVGEPIMYPEINSFLKLLHQQNISSFLVTNAQFPEEIRSLVPVTQLYVSVDASTKDSLKKIDRPLFKDFWQRFLDSLRALGEKQQRTVYRLTLVKAWNVDELKAYADLIALGQPDFIEVKGVTYCGESSASSLTMANVPWHEEVIYFVQQLANLLPDYEIACEHEHSNCLLLANHKFKVDGEWWTWIDYERFQELIQQYEESGGTKNFSAMDYMAKTPSWAVFGAGERGFDPTDTRFQRKNKTKDISGC</sequence>
<reference key="1">
    <citation type="submission" date="2006-09" db="EMBL/GenBank/DDBJ databases">
        <authorList>
            <consortium name="NIH - Zebrafish Gene Collection (ZGC) project"/>
        </authorList>
    </citation>
    <scope>NUCLEOTIDE SEQUENCE [LARGE SCALE MRNA]</scope>
    <source>
        <tissue>Ovary</tissue>
    </source>
</reference>
<dbReference type="EC" id="4.1.3.44"/>
<dbReference type="EMBL" id="BC124331">
    <property type="protein sequence ID" value="AAI24332.1"/>
    <property type="molecule type" value="mRNA"/>
</dbReference>
<dbReference type="RefSeq" id="NP_001070624.1">
    <property type="nucleotide sequence ID" value="NM_001077156.1"/>
</dbReference>
<dbReference type="SMR" id="Q08C92"/>
<dbReference type="FunCoup" id="Q08C92">
    <property type="interactions" value="836"/>
</dbReference>
<dbReference type="STRING" id="7955.ENSDARP00000117225"/>
<dbReference type="PaxDb" id="7955-ENSDARP00000117225"/>
<dbReference type="PeptideAtlas" id="Q08C92"/>
<dbReference type="GeneID" id="562076"/>
<dbReference type="KEGG" id="dre:562076"/>
<dbReference type="AGR" id="ZFIN:ZDB-GENE-060929-688"/>
<dbReference type="CTD" id="55253"/>
<dbReference type="ZFIN" id="ZDB-GENE-060929-688">
    <property type="gene designation" value="tyw1"/>
</dbReference>
<dbReference type="eggNOG" id="KOG1160">
    <property type="taxonomic scope" value="Eukaryota"/>
</dbReference>
<dbReference type="InParanoid" id="Q08C92"/>
<dbReference type="OrthoDB" id="271553at2759"/>
<dbReference type="PhylomeDB" id="Q08C92"/>
<dbReference type="UniPathway" id="UPA00375"/>
<dbReference type="PRO" id="PR:Q08C92"/>
<dbReference type="Proteomes" id="UP000000437">
    <property type="component" value="Chromosome 15"/>
</dbReference>
<dbReference type="GO" id="GO:0051539">
    <property type="term" value="F:4 iron, 4 sulfur cluster binding"/>
    <property type="evidence" value="ECO:0007669"/>
    <property type="project" value="UniProtKB-KW"/>
</dbReference>
<dbReference type="GO" id="GO:0010181">
    <property type="term" value="F:FMN binding"/>
    <property type="evidence" value="ECO:0007669"/>
    <property type="project" value="InterPro"/>
</dbReference>
<dbReference type="GO" id="GO:0046872">
    <property type="term" value="F:metal ion binding"/>
    <property type="evidence" value="ECO:0007669"/>
    <property type="project" value="UniProtKB-KW"/>
</dbReference>
<dbReference type="GO" id="GO:0102521">
    <property type="term" value="F:tRNA-4-demethylwyosine synthase activity"/>
    <property type="evidence" value="ECO:0007669"/>
    <property type="project" value="UniProtKB-EC"/>
</dbReference>
<dbReference type="GO" id="GO:0031591">
    <property type="term" value="P:wybutosine biosynthetic process"/>
    <property type="evidence" value="ECO:0000318"/>
    <property type="project" value="GO_Central"/>
</dbReference>
<dbReference type="CDD" id="cd01335">
    <property type="entry name" value="Radical_SAM"/>
    <property type="match status" value="1"/>
</dbReference>
<dbReference type="FunFam" id="3.20.20.70:FF:000196">
    <property type="entry name" value="S-adenosyl-L-methionine-dependent tRNA 4-demethylwyosine synthase"/>
    <property type="match status" value="1"/>
</dbReference>
<dbReference type="Gene3D" id="3.40.50.360">
    <property type="match status" value="1"/>
</dbReference>
<dbReference type="Gene3D" id="3.20.20.70">
    <property type="entry name" value="Aldolase class I"/>
    <property type="match status" value="1"/>
</dbReference>
<dbReference type="InterPro" id="IPR013785">
    <property type="entry name" value="Aldolase_TIM"/>
</dbReference>
<dbReference type="InterPro" id="IPR001094">
    <property type="entry name" value="Flavdoxin-like"/>
</dbReference>
<dbReference type="InterPro" id="IPR008254">
    <property type="entry name" value="Flavodoxin/NO_synth"/>
</dbReference>
<dbReference type="InterPro" id="IPR029039">
    <property type="entry name" value="Flavoprotein-like_sf"/>
</dbReference>
<dbReference type="InterPro" id="IPR007197">
    <property type="entry name" value="rSAM"/>
</dbReference>
<dbReference type="InterPro" id="IPR013917">
    <property type="entry name" value="tRNA_wybutosine-synth"/>
</dbReference>
<dbReference type="InterPro" id="IPR034556">
    <property type="entry name" value="tRNA_wybutosine-synthase"/>
</dbReference>
<dbReference type="PANTHER" id="PTHR13930">
    <property type="entry name" value="S-ADENOSYL-L-METHIONINE-DEPENDENT TRNA 4-DEMETHYLWYOSINE SYNTHASE"/>
    <property type="match status" value="1"/>
</dbReference>
<dbReference type="PANTHER" id="PTHR13930:SF0">
    <property type="entry name" value="S-ADENOSYL-L-METHIONINE-DEPENDENT TRNA 4-DEMETHYLWYOSINE SYNTHASE TYW1-RELATED"/>
    <property type="match status" value="1"/>
</dbReference>
<dbReference type="Pfam" id="PF00258">
    <property type="entry name" value="Flavodoxin_1"/>
    <property type="match status" value="1"/>
</dbReference>
<dbReference type="Pfam" id="PF04055">
    <property type="entry name" value="Radical_SAM"/>
    <property type="match status" value="1"/>
</dbReference>
<dbReference type="Pfam" id="PF08608">
    <property type="entry name" value="Wyosine_form"/>
    <property type="match status" value="1"/>
</dbReference>
<dbReference type="PRINTS" id="PR00369">
    <property type="entry name" value="FLAVODOXIN"/>
</dbReference>
<dbReference type="SFLD" id="SFLDS00029">
    <property type="entry name" value="Radical_SAM"/>
    <property type="match status" value="1"/>
</dbReference>
<dbReference type="SFLD" id="SFLDF00284">
    <property type="entry name" value="tRNA_wybutosine-synthesizing"/>
    <property type="match status" value="1"/>
</dbReference>
<dbReference type="SUPFAM" id="SSF52218">
    <property type="entry name" value="Flavoproteins"/>
    <property type="match status" value="1"/>
</dbReference>
<dbReference type="SUPFAM" id="SSF102114">
    <property type="entry name" value="Radical SAM enzymes"/>
    <property type="match status" value="1"/>
</dbReference>
<dbReference type="PROSITE" id="PS50902">
    <property type="entry name" value="FLAVODOXIN_LIKE"/>
    <property type="match status" value="1"/>
</dbReference>
<dbReference type="PROSITE" id="PS51918">
    <property type="entry name" value="RADICAL_SAM"/>
    <property type="match status" value="1"/>
</dbReference>
<comment type="function">
    <text evidence="1">Probable component of the wybutosine biosynthesis pathway. Wybutosine is a hyper modified guanosine with a tricyclic base found at the 3'-position adjacent to the anticodon of eukaryotic phenylalanine tRNA. Catalyzes the condensation of N-methylguanine with 2 carbon atoms from pyruvate to form the tricyclic 4-demethylwyosine, an intermediate in wybutosine biosynthesis (By similarity).</text>
</comment>
<comment type="catalytic activity">
    <reaction>
        <text>N(1)-methylguanosine(37) in tRNA(Phe) + pyruvate + S-adenosyl-L-methionine = 4-demethylwyosine(37) in tRNA(Phe) + 5'-deoxyadenosine + L-methionine + CO2 + H2O</text>
        <dbReference type="Rhea" id="RHEA:36347"/>
        <dbReference type="Rhea" id="RHEA-COMP:10164"/>
        <dbReference type="Rhea" id="RHEA-COMP:10165"/>
        <dbReference type="ChEBI" id="CHEBI:15361"/>
        <dbReference type="ChEBI" id="CHEBI:15377"/>
        <dbReference type="ChEBI" id="CHEBI:16526"/>
        <dbReference type="ChEBI" id="CHEBI:17319"/>
        <dbReference type="ChEBI" id="CHEBI:57844"/>
        <dbReference type="ChEBI" id="CHEBI:59789"/>
        <dbReference type="ChEBI" id="CHEBI:64315"/>
        <dbReference type="ChEBI" id="CHEBI:73542"/>
        <dbReference type="EC" id="4.1.3.44"/>
    </reaction>
</comment>
<comment type="cofactor">
    <cofactor evidence="1">
        <name>[4Fe-4S] cluster</name>
        <dbReference type="ChEBI" id="CHEBI:49883"/>
    </cofactor>
    <text evidence="1">Binds 1 [4Fe-4S] cluster. The cluster is coordinated with 3 cysteines and an exchangeable S-adenosyl-L-methionine.</text>
</comment>
<comment type="pathway">
    <text>tRNA modification; wybutosine-tRNA(Phe) biosynthesis.</text>
</comment>
<comment type="similarity">
    <text evidence="6">Belongs to the TYW1 family.</text>
</comment>